<reference key="1">
    <citation type="journal article" date="2006" name="Genome Biol.">
        <title>Genomic analysis reveals that Pseudomonas aeruginosa virulence is combinatorial.</title>
        <authorList>
            <person name="Lee D.G."/>
            <person name="Urbach J.M."/>
            <person name="Wu G."/>
            <person name="Liberati N.T."/>
            <person name="Feinbaum R.L."/>
            <person name="Miyata S."/>
            <person name="Diggins L.T."/>
            <person name="He J."/>
            <person name="Saucier M."/>
            <person name="Deziel E."/>
            <person name="Friedman L."/>
            <person name="Li L."/>
            <person name="Grills G."/>
            <person name="Montgomery K."/>
            <person name="Kucherlapati R."/>
            <person name="Rahme L.G."/>
            <person name="Ausubel F.M."/>
        </authorList>
    </citation>
    <scope>NUCLEOTIDE SEQUENCE [LARGE SCALE GENOMIC DNA]</scope>
    <source>
        <strain>UCBPP-PA14</strain>
    </source>
</reference>
<keyword id="KW-0963">Cytoplasm</keyword>
<keyword id="KW-0489">Methyltransferase</keyword>
<keyword id="KW-0698">rRNA processing</keyword>
<keyword id="KW-0949">S-adenosyl-L-methionine</keyword>
<keyword id="KW-0808">Transferase</keyword>
<evidence type="ECO:0000255" key="1">
    <source>
        <dbReference type="HAMAP-Rule" id="MF_00658"/>
    </source>
</evidence>
<organism>
    <name type="scientific">Pseudomonas aeruginosa (strain UCBPP-PA14)</name>
    <dbReference type="NCBI Taxonomy" id="208963"/>
    <lineage>
        <taxon>Bacteria</taxon>
        <taxon>Pseudomonadati</taxon>
        <taxon>Pseudomonadota</taxon>
        <taxon>Gammaproteobacteria</taxon>
        <taxon>Pseudomonadales</taxon>
        <taxon>Pseudomonadaceae</taxon>
        <taxon>Pseudomonas</taxon>
    </lineage>
</organism>
<dbReference type="EC" id="2.1.1.177" evidence="1"/>
<dbReference type="EMBL" id="CP000438">
    <property type="protein sequence ID" value="ABJ13278.1"/>
    <property type="molecule type" value="Genomic_DNA"/>
</dbReference>
<dbReference type="RefSeq" id="WP_003137690.1">
    <property type="nucleotide sequence ID" value="NZ_CP034244.1"/>
</dbReference>
<dbReference type="SMR" id="Q02SH1"/>
<dbReference type="KEGG" id="pau:PA14_12050"/>
<dbReference type="PseudoCAP" id="PA14_12050"/>
<dbReference type="HOGENOM" id="CLU_100552_1_0_6"/>
<dbReference type="BioCyc" id="PAER208963:G1G74-1000-MONOMER"/>
<dbReference type="Proteomes" id="UP000000653">
    <property type="component" value="Chromosome"/>
</dbReference>
<dbReference type="GO" id="GO:0005737">
    <property type="term" value="C:cytoplasm"/>
    <property type="evidence" value="ECO:0007669"/>
    <property type="project" value="UniProtKB-SubCell"/>
</dbReference>
<dbReference type="GO" id="GO:0070038">
    <property type="term" value="F:rRNA (pseudouridine-N3-)-methyltransferase activity"/>
    <property type="evidence" value="ECO:0007669"/>
    <property type="project" value="UniProtKB-UniRule"/>
</dbReference>
<dbReference type="CDD" id="cd18081">
    <property type="entry name" value="RlmH-like"/>
    <property type="match status" value="1"/>
</dbReference>
<dbReference type="Gene3D" id="3.40.1280.10">
    <property type="match status" value="1"/>
</dbReference>
<dbReference type="HAMAP" id="MF_00658">
    <property type="entry name" value="23SrRNA_methyltr_H"/>
    <property type="match status" value="1"/>
</dbReference>
<dbReference type="InterPro" id="IPR029028">
    <property type="entry name" value="Alpha/beta_knot_MTases"/>
</dbReference>
<dbReference type="InterPro" id="IPR003742">
    <property type="entry name" value="RlmH-like"/>
</dbReference>
<dbReference type="InterPro" id="IPR029026">
    <property type="entry name" value="tRNA_m1G_MTases_N"/>
</dbReference>
<dbReference type="NCBIfam" id="NF000986">
    <property type="entry name" value="PRK00103.1-4"/>
    <property type="match status" value="1"/>
</dbReference>
<dbReference type="NCBIfam" id="TIGR00246">
    <property type="entry name" value="tRNA_RlmH_YbeA"/>
    <property type="match status" value="1"/>
</dbReference>
<dbReference type="PANTHER" id="PTHR33603">
    <property type="entry name" value="METHYLTRANSFERASE"/>
    <property type="match status" value="1"/>
</dbReference>
<dbReference type="PANTHER" id="PTHR33603:SF1">
    <property type="entry name" value="RIBOSOMAL RNA LARGE SUBUNIT METHYLTRANSFERASE H"/>
    <property type="match status" value="1"/>
</dbReference>
<dbReference type="Pfam" id="PF02590">
    <property type="entry name" value="SPOUT_MTase"/>
    <property type="match status" value="1"/>
</dbReference>
<dbReference type="PIRSF" id="PIRSF004505">
    <property type="entry name" value="MT_bac"/>
    <property type="match status" value="1"/>
</dbReference>
<dbReference type="SUPFAM" id="SSF75217">
    <property type="entry name" value="alpha/beta knot"/>
    <property type="match status" value="1"/>
</dbReference>
<feature type="chain" id="PRO_1000061825" description="Ribosomal RNA large subunit methyltransferase H">
    <location>
        <begin position="1"/>
        <end position="155"/>
    </location>
</feature>
<feature type="binding site" evidence="1">
    <location>
        <position position="73"/>
    </location>
    <ligand>
        <name>S-adenosyl-L-methionine</name>
        <dbReference type="ChEBI" id="CHEBI:59789"/>
    </ligand>
</feature>
<feature type="binding site" evidence="1">
    <location>
        <position position="104"/>
    </location>
    <ligand>
        <name>S-adenosyl-L-methionine</name>
        <dbReference type="ChEBI" id="CHEBI:59789"/>
    </ligand>
</feature>
<feature type="binding site" evidence="1">
    <location>
        <begin position="123"/>
        <end position="128"/>
    </location>
    <ligand>
        <name>S-adenosyl-L-methionine</name>
        <dbReference type="ChEBI" id="CHEBI:59789"/>
    </ligand>
</feature>
<proteinExistence type="inferred from homology"/>
<name>RLMH_PSEAB</name>
<protein>
    <recommendedName>
        <fullName evidence="1">Ribosomal RNA large subunit methyltransferase H</fullName>
        <ecNumber evidence="1">2.1.1.177</ecNumber>
    </recommendedName>
    <alternativeName>
        <fullName evidence="1">23S rRNA (pseudouridine1915-N3)-methyltransferase</fullName>
    </alternativeName>
    <alternativeName>
        <fullName evidence="1">23S rRNA m3Psi1915 methyltransferase</fullName>
    </alternativeName>
    <alternativeName>
        <fullName evidence="1">rRNA (pseudouridine-N3-)-methyltransferase RlmH</fullName>
    </alternativeName>
</protein>
<accession>Q02SH1</accession>
<gene>
    <name evidence="1" type="primary">rlmH</name>
    <name type="ordered locus">PA14_12050</name>
</gene>
<sequence length="155" mass="17807">MRLRLIAVGSRMPRWVEEGWQEYVKRLPAELSLELVEIPLNTRGKNADVARLIRQEGEAMLARVQPGERVVTLEVEGRLWSTEQLARELDRWRLDARTVNLMVGGPEGLAPEVCARSEQRWSLSPLTLPHPLVRILVGEQIYRAWTVLSGHPYHK</sequence>
<comment type="function">
    <text evidence="1">Specifically methylates the pseudouridine at position 1915 (m3Psi1915) in 23S rRNA.</text>
</comment>
<comment type="catalytic activity">
    <reaction evidence="1">
        <text>pseudouridine(1915) in 23S rRNA + S-adenosyl-L-methionine = N(3)-methylpseudouridine(1915) in 23S rRNA + S-adenosyl-L-homocysteine + H(+)</text>
        <dbReference type="Rhea" id="RHEA:42752"/>
        <dbReference type="Rhea" id="RHEA-COMP:10221"/>
        <dbReference type="Rhea" id="RHEA-COMP:10222"/>
        <dbReference type="ChEBI" id="CHEBI:15378"/>
        <dbReference type="ChEBI" id="CHEBI:57856"/>
        <dbReference type="ChEBI" id="CHEBI:59789"/>
        <dbReference type="ChEBI" id="CHEBI:65314"/>
        <dbReference type="ChEBI" id="CHEBI:74486"/>
        <dbReference type="EC" id="2.1.1.177"/>
    </reaction>
</comment>
<comment type="subunit">
    <text evidence="1">Homodimer.</text>
</comment>
<comment type="subcellular location">
    <subcellularLocation>
        <location evidence="1">Cytoplasm</location>
    </subcellularLocation>
</comment>
<comment type="similarity">
    <text evidence="1">Belongs to the RNA methyltransferase RlmH family.</text>
</comment>